<sequence>MKQSKLLMPTLREVPADAEVKSHQLLLKAGFIRPVSAGTFSYLPMAKRVLNKIEQIIREEMDRIDANEMLVPEILPAELWQKSGRYTTYGPNLYKFKNRQDRDFILGPTHEETFTQLMADDIKSYKKLPLVVYQIQPKFRDENRPRFGLLRTREFIMKDAYSFSADQAGLDTAFRNMESAYTNVFDRIGLNYRAIVGDAGAMGGSDSKEFSAPAAAGEDIIAYSDTTDYAANLEMAKDFYERQKPTFSAEPLEKIDTPNEKTIEELSQLLDVPAEKLAKTIMFMADGELVAVVTTGDFEVNDVKVQNFLQADTLELAEEGQVKALIGASFGSLGPVKLPENVRLLVDERAADLVNFAAGANEDGKHYLNINWQRDVQLTEENIGDFRTAREGDVAVDGHGHLVFTKGIEIGHIFKLGTRYSKAMGAQVLDENGRQVDMIMGSYGIGVSRLLSAIVEQKADDDGLVWPASVAPFDVHIVPVNTKDDEQAGVASQLEELLTKQGLEVLIDDRKERAGVKFADADLIGLPIRITVGKKASEDVVEVKVRASNTNIEMRVSEVVDSVSVLLNGDK</sequence>
<organism>
    <name type="scientific">Leuconostoc citreum (strain KM20)</name>
    <dbReference type="NCBI Taxonomy" id="349519"/>
    <lineage>
        <taxon>Bacteria</taxon>
        <taxon>Bacillati</taxon>
        <taxon>Bacillota</taxon>
        <taxon>Bacilli</taxon>
        <taxon>Lactobacillales</taxon>
        <taxon>Lactobacillaceae</taxon>
        <taxon>Leuconostoc</taxon>
    </lineage>
</organism>
<evidence type="ECO:0000255" key="1">
    <source>
        <dbReference type="HAMAP-Rule" id="MF_01569"/>
    </source>
</evidence>
<accession>B1MY62</accession>
<gene>
    <name evidence="1" type="primary">proS</name>
    <name type="ordered locus">LCK_00632</name>
</gene>
<name>SYP_LEUCK</name>
<dbReference type="EC" id="6.1.1.15" evidence="1"/>
<dbReference type="EMBL" id="DQ489736">
    <property type="protein sequence ID" value="ACA82464.1"/>
    <property type="molecule type" value="Genomic_DNA"/>
</dbReference>
<dbReference type="RefSeq" id="WP_012305105.1">
    <property type="nucleotide sequence ID" value="NC_010471.1"/>
</dbReference>
<dbReference type="SMR" id="B1MY62"/>
<dbReference type="STRING" id="349519.LCK_00632"/>
<dbReference type="KEGG" id="lci:LCK_00632"/>
<dbReference type="eggNOG" id="COG0442">
    <property type="taxonomic scope" value="Bacteria"/>
</dbReference>
<dbReference type="HOGENOM" id="CLU_016739_0_0_9"/>
<dbReference type="OrthoDB" id="9809052at2"/>
<dbReference type="Proteomes" id="UP000002166">
    <property type="component" value="Chromosome"/>
</dbReference>
<dbReference type="GO" id="GO:0005829">
    <property type="term" value="C:cytosol"/>
    <property type="evidence" value="ECO:0007669"/>
    <property type="project" value="TreeGrafter"/>
</dbReference>
<dbReference type="GO" id="GO:0002161">
    <property type="term" value="F:aminoacyl-tRNA deacylase activity"/>
    <property type="evidence" value="ECO:0007669"/>
    <property type="project" value="InterPro"/>
</dbReference>
<dbReference type="GO" id="GO:0005524">
    <property type="term" value="F:ATP binding"/>
    <property type="evidence" value="ECO:0007669"/>
    <property type="project" value="UniProtKB-UniRule"/>
</dbReference>
<dbReference type="GO" id="GO:0140096">
    <property type="term" value="F:catalytic activity, acting on a protein"/>
    <property type="evidence" value="ECO:0007669"/>
    <property type="project" value="UniProtKB-ARBA"/>
</dbReference>
<dbReference type="GO" id="GO:0004827">
    <property type="term" value="F:proline-tRNA ligase activity"/>
    <property type="evidence" value="ECO:0007669"/>
    <property type="project" value="UniProtKB-UniRule"/>
</dbReference>
<dbReference type="GO" id="GO:0016740">
    <property type="term" value="F:transferase activity"/>
    <property type="evidence" value="ECO:0007669"/>
    <property type="project" value="UniProtKB-ARBA"/>
</dbReference>
<dbReference type="GO" id="GO:0006433">
    <property type="term" value="P:prolyl-tRNA aminoacylation"/>
    <property type="evidence" value="ECO:0007669"/>
    <property type="project" value="UniProtKB-UniRule"/>
</dbReference>
<dbReference type="CDD" id="cd04334">
    <property type="entry name" value="ProRS-INS"/>
    <property type="match status" value="1"/>
</dbReference>
<dbReference type="CDD" id="cd00861">
    <property type="entry name" value="ProRS_anticodon_short"/>
    <property type="match status" value="1"/>
</dbReference>
<dbReference type="CDD" id="cd00779">
    <property type="entry name" value="ProRS_core_prok"/>
    <property type="match status" value="1"/>
</dbReference>
<dbReference type="FunFam" id="3.40.50.800:FF:000011">
    <property type="entry name" value="Proline--tRNA ligase"/>
    <property type="match status" value="1"/>
</dbReference>
<dbReference type="Gene3D" id="3.40.50.800">
    <property type="entry name" value="Anticodon-binding domain"/>
    <property type="match status" value="1"/>
</dbReference>
<dbReference type="Gene3D" id="3.30.930.10">
    <property type="entry name" value="Bira Bifunctional Protein, Domain 2"/>
    <property type="match status" value="2"/>
</dbReference>
<dbReference type="Gene3D" id="3.90.960.10">
    <property type="entry name" value="YbaK/aminoacyl-tRNA synthetase-associated domain"/>
    <property type="match status" value="1"/>
</dbReference>
<dbReference type="HAMAP" id="MF_01569">
    <property type="entry name" value="Pro_tRNA_synth_type1"/>
    <property type="match status" value="1"/>
</dbReference>
<dbReference type="InterPro" id="IPR002314">
    <property type="entry name" value="aa-tRNA-synt_IIb"/>
</dbReference>
<dbReference type="InterPro" id="IPR006195">
    <property type="entry name" value="aa-tRNA-synth_II"/>
</dbReference>
<dbReference type="InterPro" id="IPR045864">
    <property type="entry name" value="aa-tRNA-synth_II/BPL/LPL"/>
</dbReference>
<dbReference type="InterPro" id="IPR004154">
    <property type="entry name" value="Anticodon-bd"/>
</dbReference>
<dbReference type="InterPro" id="IPR036621">
    <property type="entry name" value="Anticodon-bd_dom_sf"/>
</dbReference>
<dbReference type="InterPro" id="IPR002316">
    <property type="entry name" value="Pro-tRNA-ligase_IIa"/>
</dbReference>
<dbReference type="InterPro" id="IPR004500">
    <property type="entry name" value="Pro-tRNA-synth_IIa_bac-type"/>
</dbReference>
<dbReference type="InterPro" id="IPR023717">
    <property type="entry name" value="Pro-tRNA-Synthase_IIa_type1"/>
</dbReference>
<dbReference type="InterPro" id="IPR050062">
    <property type="entry name" value="Pro-tRNA_synthetase"/>
</dbReference>
<dbReference type="InterPro" id="IPR044140">
    <property type="entry name" value="ProRS_anticodon_short"/>
</dbReference>
<dbReference type="InterPro" id="IPR033730">
    <property type="entry name" value="ProRS_core_prok"/>
</dbReference>
<dbReference type="InterPro" id="IPR036754">
    <property type="entry name" value="YbaK/aa-tRNA-synt-asso_dom_sf"/>
</dbReference>
<dbReference type="InterPro" id="IPR007214">
    <property type="entry name" value="YbaK/aa-tRNA-synth-assoc-dom"/>
</dbReference>
<dbReference type="NCBIfam" id="NF006625">
    <property type="entry name" value="PRK09194.1"/>
    <property type="match status" value="1"/>
</dbReference>
<dbReference type="NCBIfam" id="TIGR00409">
    <property type="entry name" value="proS_fam_II"/>
    <property type="match status" value="1"/>
</dbReference>
<dbReference type="PANTHER" id="PTHR42753">
    <property type="entry name" value="MITOCHONDRIAL RIBOSOME PROTEIN L39/PROLYL-TRNA LIGASE FAMILY MEMBER"/>
    <property type="match status" value="1"/>
</dbReference>
<dbReference type="PANTHER" id="PTHR42753:SF2">
    <property type="entry name" value="PROLINE--TRNA LIGASE"/>
    <property type="match status" value="1"/>
</dbReference>
<dbReference type="Pfam" id="PF03129">
    <property type="entry name" value="HGTP_anticodon"/>
    <property type="match status" value="1"/>
</dbReference>
<dbReference type="Pfam" id="PF00587">
    <property type="entry name" value="tRNA-synt_2b"/>
    <property type="match status" value="1"/>
</dbReference>
<dbReference type="Pfam" id="PF04073">
    <property type="entry name" value="tRNA_edit"/>
    <property type="match status" value="1"/>
</dbReference>
<dbReference type="PRINTS" id="PR01046">
    <property type="entry name" value="TRNASYNTHPRO"/>
</dbReference>
<dbReference type="SUPFAM" id="SSF52954">
    <property type="entry name" value="Class II aaRS ABD-related"/>
    <property type="match status" value="1"/>
</dbReference>
<dbReference type="SUPFAM" id="SSF55681">
    <property type="entry name" value="Class II aaRS and biotin synthetases"/>
    <property type="match status" value="1"/>
</dbReference>
<dbReference type="SUPFAM" id="SSF55826">
    <property type="entry name" value="YbaK/ProRS associated domain"/>
    <property type="match status" value="1"/>
</dbReference>
<dbReference type="PROSITE" id="PS50862">
    <property type="entry name" value="AA_TRNA_LIGASE_II"/>
    <property type="match status" value="1"/>
</dbReference>
<keyword id="KW-0030">Aminoacyl-tRNA synthetase</keyword>
<keyword id="KW-0067">ATP-binding</keyword>
<keyword id="KW-0963">Cytoplasm</keyword>
<keyword id="KW-0436">Ligase</keyword>
<keyword id="KW-0547">Nucleotide-binding</keyword>
<keyword id="KW-0648">Protein biosynthesis</keyword>
<keyword id="KW-1185">Reference proteome</keyword>
<proteinExistence type="inferred from homology"/>
<feature type="chain" id="PRO_1000199404" description="Proline--tRNA ligase">
    <location>
        <begin position="1"/>
        <end position="571"/>
    </location>
</feature>
<comment type="function">
    <text evidence="1">Catalyzes the attachment of proline to tRNA(Pro) in a two-step reaction: proline is first activated by ATP to form Pro-AMP and then transferred to the acceptor end of tRNA(Pro). As ProRS can inadvertently accommodate and process non-cognate amino acids such as alanine and cysteine, to avoid such errors it has two additional distinct editing activities against alanine. One activity is designated as 'pretransfer' editing and involves the tRNA(Pro)-independent hydrolysis of activated Ala-AMP. The other activity is designated 'posttransfer' editing and involves deacylation of mischarged Ala-tRNA(Pro). The misacylated Cys-tRNA(Pro) is not edited by ProRS.</text>
</comment>
<comment type="catalytic activity">
    <reaction evidence="1">
        <text>tRNA(Pro) + L-proline + ATP = L-prolyl-tRNA(Pro) + AMP + diphosphate</text>
        <dbReference type="Rhea" id="RHEA:14305"/>
        <dbReference type="Rhea" id="RHEA-COMP:9700"/>
        <dbReference type="Rhea" id="RHEA-COMP:9702"/>
        <dbReference type="ChEBI" id="CHEBI:30616"/>
        <dbReference type="ChEBI" id="CHEBI:33019"/>
        <dbReference type="ChEBI" id="CHEBI:60039"/>
        <dbReference type="ChEBI" id="CHEBI:78442"/>
        <dbReference type="ChEBI" id="CHEBI:78532"/>
        <dbReference type="ChEBI" id="CHEBI:456215"/>
        <dbReference type="EC" id="6.1.1.15"/>
    </reaction>
</comment>
<comment type="subunit">
    <text evidence="1">Homodimer.</text>
</comment>
<comment type="subcellular location">
    <subcellularLocation>
        <location evidence="1">Cytoplasm</location>
    </subcellularLocation>
</comment>
<comment type="domain">
    <text evidence="1">Consists of three domains: the N-terminal catalytic domain, the editing domain and the C-terminal anticodon-binding domain.</text>
</comment>
<comment type="similarity">
    <text evidence="1">Belongs to the class-II aminoacyl-tRNA synthetase family. ProS type 1 subfamily.</text>
</comment>
<reference key="1">
    <citation type="journal article" date="2008" name="J. Bacteriol.">
        <title>Complete genome sequence of Leuconostoc citreum KM20.</title>
        <authorList>
            <person name="Kim J.F."/>
            <person name="Jeong H."/>
            <person name="Lee J.-S."/>
            <person name="Choi S.-H."/>
            <person name="Ha M."/>
            <person name="Hur C.-G."/>
            <person name="Kim J.-S."/>
            <person name="Lee S."/>
            <person name="Park H.-S."/>
            <person name="Park Y.-H."/>
            <person name="Oh T.K."/>
        </authorList>
    </citation>
    <scope>NUCLEOTIDE SEQUENCE [LARGE SCALE GENOMIC DNA]</scope>
    <source>
        <strain>KM20</strain>
    </source>
</reference>
<protein>
    <recommendedName>
        <fullName evidence="1">Proline--tRNA ligase</fullName>
        <ecNumber evidence="1">6.1.1.15</ecNumber>
    </recommendedName>
    <alternativeName>
        <fullName evidence="1">Prolyl-tRNA synthetase</fullName>
        <shortName evidence="1">ProRS</shortName>
    </alternativeName>
</protein>